<proteinExistence type="inferred from homology"/>
<gene>
    <name type="ORF">SPAC513.07</name>
</gene>
<protein>
    <recommendedName>
        <fullName>Putative uncharacterized oxidoreductase C513.07</fullName>
        <ecNumber>1.1.1.-</ecNumber>
    </recommendedName>
</protein>
<comment type="subcellular location">
    <subcellularLocation>
        <location evidence="2">Cytoplasm</location>
    </subcellularLocation>
    <subcellularLocation>
        <location evidence="2">Nucleus</location>
    </subcellularLocation>
</comment>
<comment type="similarity">
    <text evidence="3">Belongs to the NAD(P)-dependent epimerase/dehydratase family. Dihydroflavonol-4-reductase subfamily.</text>
</comment>
<evidence type="ECO:0000250" key="1">
    <source>
        <dbReference type="UniProtKB" id="A0A059TC02"/>
    </source>
</evidence>
<evidence type="ECO:0000269" key="2">
    <source>
    </source>
</evidence>
<evidence type="ECO:0000305" key="3"/>
<keyword id="KW-0963">Cytoplasm</keyword>
<keyword id="KW-0539">Nucleus</keyword>
<keyword id="KW-0560">Oxidoreductase</keyword>
<keyword id="KW-1185">Reference proteome</keyword>
<sequence>MSGKLVLVTGVTGFIGAHVAEQLLQAGYRVRGTVRSMEKADELIRLNPGLKDKIEFVIVKDVSASNAFDGVLKDVELICHIASPFFVENVTDNKSQLLDPAVKGTLGILEAAQGVKSIKRIVITSSFAAVGNFQIDPHNNKVYTEKDWNPITYEEALTTDNGIVAYCASKKLAEEAAREYVKEKKPSYDICTINPPYVYGPPIHPMKNMDSLNTSNQIFWKLIDGSKEATPFYYYYVDVRDVAAAHVFALENAKLSNGRMLVSKGVFTTGDICKVLRKEFPNKSDVIAEPVDITVDPSFFKLDNSFSKSLGFKYHSDEECYVDTAKKLWERAEEFK</sequence>
<reference key="1">
    <citation type="journal article" date="2002" name="Nature">
        <title>The genome sequence of Schizosaccharomyces pombe.</title>
        <authorList>
            <person name="Wood V."/>
            <person name="Gwilliam R."/>
            <person name="Rajandream M.A."/>
            <person name="Lyne M.H."/>
            <person name="Lyne R."/>
            <person name="Stewart A."/>
            <person name="Sgouros J.G."/>
            <person name="Peat N."/>
            <person name="Hayles J."/>
            <person name="Baker S.G."/>
            <person name="Basham D."/>
            <person name="Bowman S."/>
            <person name="Brooks K."/>
            <person name="Brown D."/>
            <person name="Brown S."/>
            <person name="Chillingworth T."/>
            <person name="Churcher C.M."/>
            <person name="Collins M."/>
            <person name="Connor R."/>
            <person name="Cronin A."/>
            <person name="Davis P."/>
            <person name="Feltwell T."/>
            <person name="Fraser A."/>
            <person name="Gentles S."/>
            <person name="Goble A."/>
            <person name="Hamlin N."/>
            <person name="Harris D.E."/>
            <person name="Hidalgo J."/>
            <person name="Hodgson G."/>
            <person name="Holroyd S."/>
            <person name="Hornsby T."/>
            <person name="Howarth S."/>
            <person name="Huckle E.J."/>
            <person name="Hunt S."/>
            <person name="Jagels K."/>
            <person name="James K.D."/>
            <person name="Jones L."/>
            <person name="Jones M."/>
            <person name="Leather S."/>
            <person name="McDonald S."/>
            <person name="McLean J."/>
            <person name="Mooney P."/>
            <person name="Moule S."/>
            <person name="Mungall K.L."/>
            <person name="Murphy L.D."/>
            <person name="Niblett D."/>
            <person name="Odell C."/>
            <person name="Oliver K."/>
            <person name="O'Neil S."/>
            <person name="Pearson D."/>
            <person name="Quail M.A."/>
            <person name="Rabbinowitsch E."/>
            <person name="Rutherford K.M."/>
            <person name="Rutter S."/>
            <person name="Saunders D."/>
            <person name="Seeger K."/>
            <person name="Sharp S."/>
            <person name="Skelton J."/>
            <person name="Simmonds M.N."/>
            <person name="Squares R."/>
            <person name="Squares S."/>
            <person name="Stevens K."/>
            <person name="Taylor K."/>
            <person name="Taylor R.G."/>
            <person name="Tivey A."/>
            <person name="Walsh S.V."/>
            <person name="Warren T."/>
            <person name="Whitehead S."/>
            <person name="Woodward J.R."/>
            <person name="Volckaert G."/>
            <person name="Aert R."/>
            <person name="Robben J."/>
            <person name="Grymonprez B."/>
            <person name="Weltjens I."/>
            <person name="Vanstreels E."/>
            <person name="Rieger M."/>
            <person name="Schaefer M."/>
            <person name="Mueller-Auer S."/>
            <person name="Gabel C."/>
            <person name="Fuchs M."/>
            <person name="Duesterhoeft A."/>
            <person name="Fritzc C."/>
            <person name="Holzer E."/>
            <person name="Moestl D."/>
            <person name="Hilbert H."/>
            <person name="Borzym K."/>
            <person name="Langer I."/>
            <person name="Beck A."/>
            <person name="Lehrach H."/>
            <person name="Reinhardt R."/>
            <person name="Pohl T.M."/>
            <person name="Eger P."/>
            <person name="Zimmermann W."/>
            <person name="Wedler H."/>
            <person name="Wambutt R."/>
            <person name="Purnelle B."/>
            <person name="Goffeau A."/>
            <person name="Cadieu E."/>
            <person name="Dreano S."/>
            <person name="Gloux S."/>
            <person name="Lelaure V."/>
            <person name="Mottier S."/>
            <person name="Galibert F."/>
            <person name="Aves S.J."/>
            <person name="Xiang Z."/>
            <person name="Hunt C."/>
            <person name="Moore K."/>
            <person name="Hurst S.M."/>
            <person name="Lucas M."/>
            <person name="Rochet M."/>
            <person name="Gaillardin C."/>
            <person name="Tallada V.A."/>
            <person name="Garzon A."/>
            <person name="Thode G."/>
            <person name="Daga R.R."/>
            <person name="Cruzado L."/>
            <person name="Jimenez J."/>
            <person name="Sanchez M."/>
            <person name="del Rey F."/>
            <person name="Benito J."/>
            <person name="Dominguez A."/>
            <person name="Revuelta J.L."/>
            <person name="Moreno S."/>
            <person name="Armstrong J."/>
            <person name="Forsburg S.L."/>
            <person name="Cerutti L."/>
            <person name="Lowe T."/>
            <person name="McCombie W.R."/>
            <person name="Paulsen I."/>
            <person name="Potashkin J."/>
            <person name="Shpakovski G.V."/>
            <person name="Ussery D."/>
            <person name="Barrell B.G."/>
            <person name="Nurse P."/>
        </authorList>
    </citation>
    <scope>NUCLEOTIDE SEQUENCE [LARGE SCALE GENOMIC DNA]</scope>
    <source>
        <strain>972 / ATCC 24843</strain>
    </source>
</reference>
<reference key="2">
    <citation type="journal article" date="2006" name="Nat. Biotechnol.">
        <title>ORFeome cloning and global analysis of protein localization in the fission yeast Schizosaccharomyces pombe.</title>
        <authorList>
            <person name="Matsuyama A."/>
            <person name="Arai R."/>
            <person name="Yashiroda Y."/>
            <person name="Shirai A."/>
            <person name="Kamata A."/>
            <person name="Sekido S."/>
            <person name="Kobayashi Y."/>
            <person name="Hashimoto A."/>
            <person name="Hamamoto M."/>
            <person name="Hiraoka Y."/>
            <person name="Horinouchi S."/>
            <person name="Yoshida M."/>
        </authorList>
    </citation>
    <scope>SUBCELLULAR LOCATION [LARGE SCALE ANALYSIS]</scope>
</reference>
<name>YKJ7_SCHPO</name>
<dbReference type="EC" id="1.1.1.-"/>
<dbReference type="EMBL" id="CU329670">
    <property type="protein sequence ID" value="CAB58730.1"/>
    <property type="molecule type" value="Genomic_DNA"/>
</dbReference>
<dbReference type="PIR" id="T38902">
    <property type="entry name" value="T38902"/>
</dbReference>
<dbReference type="RefSeq" id="NP_593981.1">
    <property type="nucleotide sequence ID" value="NM_001019407.2"/>
</dbReference>
<dbReference type="SMR" id="Q9UT59"/>
<dbReference type="BioGRID" id="279891">
    <property type="interactions" value="38"/>
</dbReference>
<dbReference type="FunCoup" id="Q9UT59">
    <property type="interactions" value="53"/>
</dbReference>
<dbReference type="STRING" id="284812.Q9UT59"/>
<dbReference type="iPTMnet" id="Q9UT59"/>
<dbReference type="PaxDb" id="4896-SPAC513.07.1"/>
<dbReference type="EnsemblFungi" id="SPAC513.07.1">
    <property type="protein sequence ID" value="SPAC513.07.1:pep"/>
    <property type="gene ID" value="SPAC513.07"/>
</dbReference>
<dbReference type="KEGG" id="spo:2543471"/>
<dbReference type="PomBase" id="SPAC513.07"/>
<dbReference type="VEuPathDB" id="FungiDB:SPAC513.07"/>
<dbReference type="eggNOG" id="KOG1502">
    <property type="taxonomic scope" value="Eukaryota"/>
</dbReference>
<dbReference type="HOGENOM" id="CLU_007383_9_2_1"/>
<dbReference type="InParanoid" id="Q9UT59"/>
<dbReference type="OMA" id="HVTCVIR"/>
<dbReference type="PhylomeDB" id="Q9UT59"/>
<dbReference type="PRO" id="PR:Q9UT59"/>
<dbReference type="Proteomes" id="UP000002485">
    <property type="component" value="Chromosome I"/>
</dbReference>
<dbReference type="GO" id="GO:0005829">
    <property type="term" value="C:cytosol"/>
    <property type="evidence" value="ECO:0007005"/>
    <property type="project" value="PomBase"/>
</dbReference>
<dbReference type="GO" id="GO:0005634">
    <property type="term" value="C:nucleus"/>
    <property type="evidence" value="ECO:0007005"/>
    <property type="project" value="PomBase"/>
</dbReference>
<dbReference type="GO" id="GO:0043892">
    <property type="term" value="F:methylglyoxal reductase (NADPH) activity"/>
    <property type="evidence" value="ECO:0000266"/>
    <property type="project" value="PomBase"/>
</dbReference>
<dbReference type="GO" id="GO:0016616">
    <property type="term" value="F:oxidoreductase activity, acting on the CH-OH group of donors, NAD or NADP as acceptor"/>
    <property type="evidence" value="ECO:0000318"/>
    <property type="project" value="GO_Central"/>
</dbReference>
<dbReference type="GO" id="GO:0140041">
    <property type="term" value="P:cellular detoxification of methylglyoxal"/>
    <property type="evidence" value="ECO:0000305"/>
    <property type="project" value="PomBase"/>
</dbReference>
<dbReference type="CDD" id="cd05227">
    <property type="entry name" value="AR_SDR_e"/>
    <property type="match status" value="1"/>
</dbReference>
<dbReference type="FunFam" id="3.40.50.720:FF:000191">
    <property type="entry name" value="Methylglyoxal reductase (NADPH-dependent)"/>
    <property type="match status" value="1"/>
</dbReference>
<dbReference type="Gene3D" id="3.40.50.720">
    <property type="entry name" value="NAD(P)-binding Rossmann-like Domain"/>
    <property type="match status" value="1"/>
</dbReference>
<dbReference type="InterPro" id="IPR001509">
    <property type="entry name" value="Epimerase_deHydtase"/>
</dbReference>
<dbReference type="InterPro" id="IPR036291">
    <property type="entry name" value="NAD(P)-bd_dom_sf"/>
</dbReference>
<dbReference type="InterPro" id="IPR050425">
    <property type="entry name" value="NAD(P)_dehydrat-like"/>
</dbReference>
<dbReference type="PANTHER" id="PTHR10366">
    <property type="entry name" value="NAD DEPENDENT EPIMERASE/DEHYDRATASE"/>
    <property type="match status" value="1"/>
</dbReference>
<dbReference type="PANTHER" id="PTHR10366:SF564">
    <property type="entry name" value="STEROL-4-ALPHA-CARBOXYLATE 3-DEHYDROGENASE, DECARBOXYLATING"/>
    <property type="match status" value="1"/>
</dbReference>
<dbReference type="Pfam" id="PF01370">
    <property type="entry name" value="Epimerase"/>
    <property type="match status" value="1"/>
</dbReference>
<dbReference type="SUPFAM" id="SSF51735">
    <property type="entry name" value="NAD(P)-binding Rossmann-fold domains"/>
    <property type="match status" value="1"/>
</dbReference>
<feature type="chain" id="PRO_0000316223" description="Putative uncharacterized oxidoreductase C513.07">
    <location>
        <begin position="1"/>
        <end position="336"/>
    </location>
</feature>
<feature type="binding site" evidence="1">
    <location>
        <position position="39"/>
    </location>
    <ligand>
        <name>NADP(+)</name>
        <dbReference type="ChEBI" id="CHEBI:58349"/>
    </ligand>
</feature>
<feature type="binding site" evidence="1">
    <location>
        <position position="166"/>
    </location>
    <ligand>
        <name>NADP(+)</name>
        <dbReference type="ChEBI" id="CHEBI:58349"/>
    </ligand>
</feature>
<accession>Q9UT59</accession>
<organism>
    <name type="scientific">Schizosaccharomyces pombe (strain 972 / ATCC 24843)</name>
    <name type="common">Fission yeast</name>
    <dbReference type="NCBI Taxonomy" id="284812"/>
    <lineage>
        <taxon>Eukaryota</taxon>
        <taxon>Fungi</taxon>
        <taxon>Dikarya</taxon>
        <taxon>Ascomycota</taxon>
        <taxon>Taphrinomycotina</taxon>
        <taxon>Schizosaccharomycetes</taxon>
        <taxon>Schizosaccharomycetales</taxon>
        <taxon>Schizosaccharomycetaceae</taxon>
        <taxon>Schizosaccharomyces</taxon>
    </lineage>
</organism>